<dbReference type="EC" id="2.8.1.13" evidence="1"/>
<dbReference type="EMBL" id="AM421808">
    <property type="protein sequence ID" value="CAM10679.1"/>
    <property type="molecule type" value="Genomic_DNA"/>
</dbReference>
<dbReference type="RefSeq" id="WP_002219000.1">
    <property type="nucleotide sequence ID" value="NC_008767.1"/>
</dbReference>
<dbReference type="SMR" id="A1KUY0"/>
<dbReference type="KEGG" id="nmc:NMC1473"/>
<dbReference type="HOGENOM" id="CLU_035188_1_0_4"/>
<dbReference type="Proteomes" id="UP000002286">
    <property type="component" value="Chromosome"/>
</dbReference>
<dbReference type="GO" id="GO:0005737">
    <property type="term" value="C:cytoplasm"/>
    <property type="evidence" value="ECO:0007669"/>
    <property type="project" value="UniProtKB-SubCell"/>
</dbReference>
<dbReference type="GO" id="GO:0005524">
    <property type="term" value="F:ATP binding"/>
    <property type="evidence" value="ECO:0007669"/>
    <property type="project" value="UniProtKB-KW"/>
</dbReference>
<dbReference type="GO" id="GO:0000049">
    <property type="term" value="F:tRNA binding"/>
    <property type="evidence" value="ECO:0007669"/>
    <property type="project" value="UniProtKB-KW"/>
</dbReference>
<dbReference type="GO" id="GO:0103016">
    <property type="term" value="F:tRNA-uridine 2-sulfurtransferase activity"/>
    <property type="evidence" value="ECO:0007669"/>
    <property type="project" value="UniProtKB-EC"/>
</dbReference>
<dbReference type="GO" id="GO:0002143">
    <property type="term" value="P:tRNA wobble position uridine thiolation"/>
    <property type="evidence" value="ECO:0007669"/>
    <property type="project" value="TreeGrafter"/>
</dbReference>
<dbReference type="CDD" id="cd01998">
    <property type="entry name" value="MnmA_TRMU-like"/>
    <property type="match status" value="1"/>
</dbReference>
<dbReference type="FunFam" id="2.30.30.280:FF:000001">
    <property type="entry name" value="tRNA-specific 2-thiouridylase MnmA"/>
    <property type="match status" value="1"/>
</dbReference>
<dbReference type="FunFam" id="2.40.30.10:FF:000023">
    <property type="entry name" value="tRNA-specific 2-thiouridylase MnmA"/>
    <property type="match status" value="1"/>
</dbReference>
<dbReference type="FunFam" id="3.40.50.620:FF:000004">
    <property type="entry name" value="tRNA-specific 2-thiouridylase MnmA"/>
    <property type="match status" value="1"/>
</dbReference>
<dbReference type="Gene3D" id="2.30.30.280">
    <property type="entry name" value="Adenine nucleotide alpha hydrolases-like domains"/>
    <property type="match status" value="1"/>
</dbReference>
<dbReference type="Gene3D" id="3.40.50.620">
    <property type="entry name" value="HUPs"/>
    <property type="match status" value="1"/>
</dbReference>
<dbReference type="Gene3D" id="2.40.30.10">
    <property type="entry name" value="Translation factors"/>
    <property type="match status" value="1"/>
</dbReference>
<dbReference type="HAMAP" id="MF_00144">
    <property type="entry name" value="tRNA_thiouridyl_MnmA"/>
    <property type="match status" value="1"/>
</dbReference>
<dbReference type="InterPro" id="IPR004506">
    <property type="entry name" value="MnmA-like"/>
</dbReference>
<dbReference type="InterPro" id="IPR046885">
    <property type="entry name" value="MnmA-like_C"/>
</dbReference>
<dbReference type="InterPro" id="IPR046884">
    <property type="entry name" value="MnmA-like_central"/>
</dbReference>
<dbReference type="InterPro" id="IPR023382">
    <property type="entry name" value="MnmA-like_central_sf"/>
</dbReference>
<dbReference type="InterPro" id="IPR014729">
    <property type="entry name" value="Rossmann-like_a/b/a_fold"/>
</dbReference>
<dbReference type="NCBIfam" id="NF001138">
    <property type="entry name" value="PRK00143.1"/>
    <property type="match status" value="1"/>
</dbReference>
<dbReference type="NCBIfam" id="TIGR00420">
    <property type="entry name" value="trmU"/>
    <property type="match status" value="1"/>
</dbReference>
<dbReference type="PANTHER" id="PTHR11933:SF5">
    <property type="entry name" value="MITOCHONDRIAL TRNA-SPECIFIC 2-THIOURIDYLASE 1"/>
    <property type="match status" value="1"/>
</dbReference>
<dbReference type="PANTHER" id="PTHR11933">
    <property type="entry name" value="TRNA 5-METHYLAMINOMETHYL-2-THIOURIDYLATE -METHYLTRANSFERASE"/>
    <property type="match status" value="1"/>
</dbReference>
<dbReference type="Pfam" id="PF03054">
    <property type="entry name" value="tRNA_Me_trans"/>
    <property type="match status" value="1"/>
</dbReference>
<dbReference type="Pfam" id="PF20258">
    <property type="entry name" value="tRNA_Me_trans_C"/>
    <property type="match status" value="1"/>
</dbReference>
<dbReference type="Pfam" id="PF20259">
    <property type="entry name" value="tRNA_Me_trans_M"/>
    <property type="match status" value="1"/>
</dbReference>
<dbReference type="SUPFAM" id="SSF52402">
    <property type="entry name" value="Adenine nucleotide alpha hydrolases-like"/>
    <property type="match status" value="1"/>
</dbReference>
<accession>A1KUY0</accession>
<gene>
    <name evidence="1" type="primary">mnmA</name>
    <name type="synonym">trmU</name>
    <name type="ordered locus">NMC1473</name>
</gene>
<reference key="1">
    <citation type="journal article" date="2007" name="PLoS Genet.">
        <title>Meningococcal genetic variation mechanisms viewed through comparative analysis of serogroup C strain FAM18.</title>
        <authorList>
            <person name="Bentley S.D."/>
            <person name="Vernikos G.S."/>
            <person name="Snyder L.A.S."/>
            <person name="Churcher C."/>
            <person name="Arrowsmith C."/>
            <person name="Chillingworth T."/>
            <person name="Cronin A."/>
            <person name="Davis P.H."/>
            <person name="Holroyd N.E."/>
            <person name="Jagels K."/>
            <person name="Maddison M."/>
            <person name="Moule S."/>
            <person name="Rabbinowitsch E."/>
            <person name="Sharp S."/>
            <person name="Unwin L."/>
            <person name="Whitehead S."/>
            <person name="Quail M.A."/>
            <person name="Achtman M."/>
            <person name="Barrell B.G."/>
            <person name="Saunders N.J."/>
            <person name="Parkhill J."/>
        </authorList>
    </citation>
    <scope>NUCLEOTIDE SEQUENCE [LARGE SCALE GENOMIC DNA]</scope>
    <source>
        <strain>ATCC 700532 / DSM 15464 / FAM18</strain>
    </source>
</reference>
<name>MNMA_NEIMF</name>
<sequence>MNTTANPSNIIVGLSGGVDSSVTAALLKQQGYQVRGVFMQNWEDDDNDEYCSIKQDSFDAIAVADIIGIDIDIVNFAAQYKDKVFAYFLQEYSAGRTPNPDVLCNAEIKFKCFLDYAVGQGADTIATGHYARKEVRNGVHYLLKGLDRNKDQSYFLYRLKPFQLERAIFPLGGLEKPEVRRLAAEFNLPTAAKKDSTGICFIGERPFREFLQKYLPTDNGKMVTPEGKTVGEHVGLMFYTLGQRKGLGIGGAGEPWFVAAKDLTKNELIVVQGHDHPLLYTRSLVMNDLSFTLPERPKAGRYTCKTRYRMADAPCELRYLDEETAELVFDEPQWAVTPGQSAVLYDGDICLGGGIIQTTDKPVIITR</sequence>
<protein>
    <recommendedName>
        <fullName evidence="1">tRNA-specific 2-thiouridylase MnmA</fullName>
        <ecNumber evidence="1">2.8.1.13</ecNumber>
    </recommendedName>
</protein>
<feature type="chain" id="PRO_1000009547" description="tRNA-specific 2-thiouridylase MnmA">
    <location>
        <begin position="1"/>
        <end position="367"/>
    </location>
</feature>
<feature type="region of interest" description="Interaction with target base in tRNA" evidence="1">
    <location>
        <begin position="99"/>
        <end position="101"/>
    </location>
</feature>
<feature type="region of interest" description="Interaction with tRNA" evidence="1">
    <location>
        <begin position="150"/>
        <end position="152"/>
    </location>
</feature>
<feature type="region of interest" description="Interaction with tRNA" evidence="1">
    <location>
        <begin position="307"/>
        <end position="308"/>
    </location>
</feature>
<feature type="active site" description="Nucleophile" evidence="1">
    <location>
        <position position="104"/>
    </location>
</feature>
<feature type="active site" description="Cysteine persulfide intermediate" evidence="1">
    <location>
        <position position="200"/>
    </location>
</feature>
<feature type="binding site" evidence="1">
    <location>
        <begin position="13"/>
        <end position="20"/>
    </location>
    <ligand>
        <name>ATP</name>
        <dbReference type="ChEBI" id="CHEBI:30616"/>
    </ligand>
</feature>
<feature type="binding site" evidence="1">
    <location>
        <position position="39"/>
    </location>
    <ligand>
        <name>ATP</name>
        <dbReference type="ChEBI" id="CHEBI:30616"/>
    </ligand>
</feature>
<feature type="binding site" evidence="1">
    <location>
        <position position="128"/>
    </location>
    <ligand>
        <name>ATP</name>
        <dbReference type="ChEBI" id="CHEBI:30616"/>
    </ligand>
</feature>
<feature type="site" description="Interaction with tRNA" evidence="1">
    <location>
        <position position="129"/>
    </location>
</feature>
<feature type="site" description="Interaction with tRNA" evidence="1">
    <location>
        <position position="340"/>
    </location>
</feature>
<feature type="disulfide bond" description="Alternate" evidence="1">
    <location>
        <begin position="104"/>
        <end position="200"/>
    </location>
</feature>
<keyword id="KW-0067">ATP-binding</keyword>
<keyword id="KW-0963">Cytoplasm</keyword>
<keyword id="KW-1015">Disulfide bond</keyword>
<keyword id="KW-0547">Nucleotide-binding</keyword>
<keyword id="KW-0694">RNA-binding</keyword>
<keyword id="KW-0808">Transferase</keyword>
<keyword id="KW-0819">tRNA processing</keyword>
<keyword id="KW-0820">tRNA-binding</keyword>
<organism>
    <name type="scientific">Neisseria meningitidis serogroup C / serotype 2a (strain ATCC 700532 / DSM 15464 / FAM18)</name>
    <dbReference type="NCBI Taxonomy" id="272831"/>
    <lineage>
        <taxon>Bacteria</taxon>
        <taxon>Pseudomonadati</taxon>
        <taxon>Pseudomonadota</taxon>
        <taxon>Betaproteobacteria</taxon>
        <taxon>Neisseriales</taxon>
        <taxon>Neisseriaceae</taxon>
        <taxon>Neisseria</taxon>
    </lineage>
</organism>
<comment type="function">
    <text evidence="1">Catalyzes the 2-thiolation of uridine at the wobble position (U34) of tRNA, leading to the formation of s(2)U34.</text>
</comment>
<comment type="catalytic activity">
    <reaction evidence="1">
        <text>S-sulfanyl-L-cysteinyl-[protein] + uridine(34) in tRNA + AH2 + ATP = 2-thiouridine(34) in tRNA + L-cysteinyl-[protein] + A + AMP + diphosphate + H(+)</text>
        <dbReference type="Rhea" id="RHEA:47032"/>
        <dbReference type="Rhea" id="RHEA-COMP:10131"/>
        <dbReference type="Rhea" id="RHEA-COMP:11726"/>
        <dbReference type="Rhea" id="RHEA-COMP:11727"/>
        <dbReference type="Rhea" id="RHEA-COMP:11728"/>
        <dbReference type="ChEBI" id="CHEBI:13193"/>
        <dbReference type="ChEBI" id="CHEBI:15378"/>
        <dbReference type="ChEBI" id="CHEBI:17499"/>
        <dbReference type="ChEBI" id="CHEBI:29950"/>
        <dbReference type="ChEBI" id="CHEBI:30616"/>
        <dbReference type="ChEBI" id="CHEBI:33019"/>
        <dbReference type="ChEBI" id="CHEBI:61963"/>
        <dbReference type="ChEBI" id="CHEBI:65315"/>
        <dbReference type="ChEBI" id="CHEBI:87170"/>
        <dbReference type="ChEBI" id="CHEBI:456215"/>
        <dbReference type="EC" id="2.8.1.13"/>
    </reaction>
</comment>
<comment type="subcellular location">
    <subcellularLocation>
        <location evidence="1">Cytoplasm</location>
    </subcellularLocation>
</comment>
<comment type="similarity">
    <text evidence="1">Belongs to the MnmA/TRMU family.</text>
</comment>
<proteinExistence type="inferred from homology"/>
<evidence type="ECO:0000255" key="1">
    <source>
        <dbReference type="HAMAP-Rule" id="MF_00144"/>
    </source>
</evidence>